<sequence length="449" mass="49858">MLNYTGLENKNVLVVGLAKSGYEAAKLLSKLGANVTVNDGKDLSQDAHAKDLESMGISVVSGSHPLTLLDNNPIIVKNPGIPYTVSIIDEAVKRGLKILTEVELSYLISEAPIIAVTGTNGKTTVTSLIGDMFKKSRLTGRLSGNIGYVASKVAQEVKPTDYLVTELSSFQLLGIEKYKPHIAIITNIYSAHLDYHENLENYQNAKKQIYKNQTEEDYLICNYHQRQVIESEELKAKTLYFSTQQEVDGIYIKDGFIIYKGVRIINTEDLVLPGEHNLENILAAVLACILAGVPIKAIIDSLTTFSGIEHRLQYVGTNRTNKYYNDSKATNTLATQFALNSFNQPIIWLCGGLDRGNEFDELIPYMENVRAMVVFGQTKAKFAKLGNSQGKSVIEANNVEDAVDKVQDIIEPNDVVLLSPACASWDQYSTFEERGEKFIERFRAHLPSY</sequence>
<gene>
    <name evidence="1" type="primary">murD</name>
    <name type="ordered locus">SAS1117</name>
</gene>
<proteinExistence type="inferred from homology"/>
<comment type="function">
    <text evidence="1">Cell wall formation. Catalyzes the addition of glutamate to the nucleotide precursor UDP-N-acetylmuramoyl-L-alanine (UMA).</text>
</comment>
<comment type="catalytic activity">
    <reaction evidence="1">
        <text>UDP-N-acetyl-alpha-D-muramoyl-L-alanine + D-glutamate + ATP = UDP-N-acetyl-alpha-D-muramoyl-L-alanyl-D-glutamate + ADP + phosphate + H(+)</text>
        <dbReference type="Rhea" id="RHEA:16429"/>
        <dbReference type="ChEBI" id="CHEBI:15378"/>
        <dbReference type="ChEBI" id="CHEBI:29986"/>
        <dbReference type="ChEBI" id="CHEBI:30616"/>
        <dbReference type="ChEBI" id="CHEBI:43474"/>
        <dbReference type="ChEBI" id="CHEBI:83898"/>
        <dbReference type="ChEBI" id="CHEBI:83900"/>
        <dbReference type="ChEBI" id="CHEBI:456216"/>
        <dbReference type="EC" id="6.3.2.9"/>
    </reaction>
</comment>
<comment type="pathway">
    <text evidence="1">Cell wall biogenesis; peptidoglycan biosynthesis.</text>
</comment>
<comment type="subcellular location">
    <subcellularLocation>
        <location evidence="1">Cytoplasm</location>
    </subcellularLocation>
</comment>
<comment type="similarity">
    <text evidence="1">Belongs to the MurCDEF family.</text>
</comment>
<reference key="1">
    <citation type="journal article" date="2004" name="Proc. Natl. Acad. Sci. U.S.A.">
        <title>Complete genomes of two clinical Staphylococcus aureus strains: evidence for the rapid evolution of virulence and drug resistance.</title>
        <authorList>
            <person name="Holden M.T.G."/>
            <person name="Feil E.J."/>
            <person name="Lindsay J.A."/>
            <person name="Peacock S.J."/>
            <person name="Day N.P.J."/>
            <person name="Enright M.C."/>
            <person name="Foster T.J."/>
            <person name="Moore C.E."/>
            <person name="Hurst L."/>
            <person name="Atkin R."/>
            <person name="Barron A."/>
            <person name="Bason N."/>
            <person name="Bentley S.D."/>
            <person name="Chillingworth C."/>
            <person name="Chillingworth T."/>
            <person name="Churcher C."/>
            <person name="Clark L."/>
            <person name="Corton C."/>
            <person name="Cronin A."/>
            <person name="Doggett J."/>
            <person name="Dowd L."/>
            <person name="Feltwell T."/>
            <person name="Hance Z."/>
            <person name="Harris B."/>
            <person name="Hauser H."/>
            <person name="Holroyd S."/>
            <person name="Jagels K."/>
            <person name="James K.D."/>
            <person name="Lennard N."/>
            <person name="Line A."/>
            <person name="Mayes R."/>
            <person name="Moule S."/>
            <person name="Mungall K."/>
            <person name="Ormond D."/>
            <person name="Quail M.A."/>
            <person name="Rabbinowitsch E."/>
            <person name="Rutherford K.M."/>
            <person name="Sanders M."/>
            <person name="Sharp S."/>
            <person name="Simmonds M."/>
            <person name="Stevens K."/>
            <person name="Whitehead S."/>
            <person name="Barrell B.G."/>
            <person name="Spratt B.G."/>
            <person name="Parkhill J."/>
        </authorList>
    </citation>
    <scope>NUCLEOTIDE SEQUENCE [LARGE SCALE GENOMIC DNA]</scope>
    <source>
        <strain>MSSA476</strain>
    </source>
</reference>
<keyword id="KW-0067">ATP-binding</keyword>
<keyword id="KW-0131">Cell cycle</keyword>
<keyword id="KW-0132">Cell division</keyword>
<keyword id="KW-0133">Cell shape</keyword>
<keyword id="KW-0961">Cell wall biogenesis/degradation</keyword>
<keyword id="KW-0963">Cytoplasm</keyword>
<keyword id="KW-0436">Ligase</keyword>
<keyword id="KW-0547">Nucleotide-binding</keyword>
<keyword id="KW-0573">Peptidoglycan synthesis</keyword>
<feature type="chain" id="PRO_0000109086" description="UDP-N-acetylmuramoylalanine--D-glutamate ligase">
    <location>
        <begin position="1"/>
        <end position="449"/>
    </location>
</feature>
<feature type="binding site" evidence="1">
    <location>
        <begin position="118"/>
        <end position="124"/>
    </location>
    <ligand>
        <name>ATP</name>
        <dbReference type="ChEBI" id="CHEBI:30616"/>
    </ligand>
</feature>
<protein>
    <recommendedName>
        <fullName evidence="1">UDP-N-acetylmuramoylalanine--D-glutamate ligase</fullName>
        <ecNumber evidence="1">6.3.2.9</ecNumber>
    </recommendedName>
    <alternativeName>
        <fullName evidence="1">D-glutamic acid-adding enzyme</fullName>
    </alternativeName>
    <alternativeName>
        <fullName evidence="1">UDP-N-acetylmuramoyl-L-alanyl-D-glutamate synthetase</fullName>
    </alternativeName>
</protein>
<dbReference type="EC" id="6.3.2.9" evidence="1"/>
<dbReference type="EMBL" id="BX571857">
    <property type="protein sequence ID" value="CAG42894.1"/>
    <property type="molecule type" value="Genomic_DNA"/>
</dbReference>
<dbReference type="RefSeq" id="WP_000935989.1">
    <property type="nucleotide sequence ID" value="NC_002953.3"/>
</dbReference>
<dbReference type="SMR" id="Q6GA29"/>
<dbReference type="KEGG" id="sas:SAS1117"/>
<dbReference type="HOGENOM" id="CLU_032540_0_1_9"/>
<dbReference type="UniPathway" id="UPA00219"/>
<dbReference type="GO" id="GO:0005737">
    <property type="term" value="C:cytoplasm"/>
    <property type="evidence" value="ECO:0007669"/>
    <property type="project" value="UniProtKB-SubCell"/>
</dbReference>
<dbReference type="GO" id="GO:0005524">
    <property type="term" value="F:ATP binding"/>
    <property type="evidence" value="ECO:0007669"/>
    <property type="project" value="UniProtKB-UniRule"/>
</dbReference>
<dbReference type="GO" id="GO:0008764">
    <property type="term" value="F:UDP-N-acetylmuramoylalanine-D-glutamate ligase activity"/>
    <property type="evidence" value="ECO:0007669"/>
    <property type="project" value="UniProtKB-UniRule"/>
</dbReference>
<dbReference type="GO" id="GO:0051301">
    <property type="term" value="P:cell division"/>
    <property type="evidence" value="ECO:0007669"/>
    <property type="project" value="UniProtKB-KW"/>
</dbReference>
<dbReference type="GO" id="GO:0071555">
    <property type="term" value="P:cell wall organization"/>
    <property type="evidence" value="ECO:0007669"/>
    <property type="project" value="UniProtKB-KW"/>
</dbReference>
<dbReference type="GO" id="GO:0009252">
    <property type="term" value="P:peptidoglycan biosynthetic process"/>
    <property type="evidence" value="ECO:0007669"/>
    <property type="project" value="UniProtKB-UniRule"/>
</dbReference>
<dbReference type="GO" id="GO:0008360">
    <property type="term" value="P:regulation of cell shape"/>
    <property type="evidence" value="ECO:0007669"/>
    <property type="project" value="UniProtKB-KW"/>
</dbReference>
<dbReference type="Gene3D" id="3.90.190.20">
    <property type="entry name" value="Mur ligase, C-terminal domain"/>
    <property type="match status" value="1"/>
</dbReference>
<dbReference type="Gene3D" id="3.40.1190.10">
    <property type="entry name" value="Mur-like, catalytic domain"/>
    <property type="match status" value="1"/>
</dbReference>
<dbReference type="Gene3D" id="3.40.50.720">
    <property type="entry name" value="NAD(P)-binding Rossmann-like Domain"/>
    <property type="match status" value="1"/>
</dbReference>
<dbReference type="HAMAP" id="MF_00639">
    <property type="entry name" value="MurD"/>
    <property type="match status" value="1"/>
</dbReference>
<dbReference type="InterPro" id="IPR036565">
    <property type="entry name" value="Mur-like_cat_sf"/>
</dbReference>
<dbReference type="InterPro" id="IPR004101">
    <property type="entry name" value="Mur_ligase_C"/>
</dbReference>
<dbReference type="InterPro" id="IPR036615">
    <property type="entry name" value="Mur_ligase_C_dom_sf"/>
</dbReference>
<dbReference type="InterPro" id="IPR013221">
    <property type="entry name" value="Mur_ligase_cen"/>
</dbReference>
<dbReference type="InterPro" id="IPR005762">
    <property type="entry name" value="MurD"/>
</dbReference>
<dbReference type="NCBIfam" id="TIGR01087">
    <property type="entry name" value="murD"/>
    <property type="match status" value="1"/>
</dbReference>
<dbReference type="PANTHER" id="PTHR43692">
    <property type="entry name" value="UDP-N-ACETYLMURAMOYLALANINE--D-GLUTAMATE LIGASE"/>
    <property type="match status" value="1"/>
</dbReference>
<dbReference type="PANTHER" id="PTHR43692:SF1">
    <property type="entry name" value="UDP-N-ACETYLMURAMOYLALANINE--D-GLUTAMATE LIGASE"/>
    <property type="match status" value="1"/>
</dbReference>
<dbReference type="Pfam" id="PF02875">
    <property type="entry name" value="Mur_ligase_C"/>
    <property type="match status" value="1"/>
</dbReference>
<dbReference type="Pfam" id="PF08245">
    <property type="entry name" value="Mur_ligase_M"/>
    <property type="match status" value="1"/>
</dbReference>
<dbReference type="Pfam" id="PF21799">
    <property type="entry name" value="MurD-like_N"/>
    <property type="match status" value="1"/>
</dbReference>
<dbReference type="SUPFAM" id="SSF51984">
    <property type="entry name" value="MurCD N-terminal domain"/>
    <property type="match status" value="1"/>
</dbReference>
<dbReference type="SUPFAM" id="SSF53623">
    <property type="entry name" value="MurD-like peptide ligases, catalytic domain"/>
    <property type="match status" value="1"/>
</dbReference>
<dbReference type="SUPFAM" id="SSF53244">
    <property type="entry name" value="MurD-like peptide ligases, peptide-binding domain"/>
    <property type="match status" value="1"/>
</dbReference>
<name>MURD_STAAS</name>
<evidence type="ECO:0000255" key="1">
    <source>
        <dbReference type="HAMAP-Rule" id="MF_00639"/>
    </source>
</evidence>
<accession>Q6GA29</accession>
<organism>
    <name type="scientific">Staphylococcus aureus (strain MSSA476)</name>
    <dbReference type="NCBI Taxonomy" id="282459"/>
    <lineage>
        <taxon>Bacteria</taxon>
        <taxon>Bacillati</taxon>
        <taxon>Bacillota</taxon>
        <taxon>Bacilli</taxon>
        <taxon>Bacillales</taxon>
        <taxon>Staphylococcaceae</taxon>
        <taxon>Staphylococcus</taxon>
    </lineage>
</organism>